<organism>
    <name type="scientific">Dictyoglomus turgidum (strain DSM 6724 / Z-1310)</name>
    <dbReference type="NCBI Taxonomy" id="515635"/>
    <lineage>
        <taxon>Bacteria</taxon>
        <taxon>Pseudomonadati</taxon>
        <taxon>Dictyoglomota</taxon>
        <taxon>Dictyoglomia</taxon>
        <taxon>Dictyoglomales</taxon>
        <taxon>Dictyoglomaceae</taxon>
        <taxon>Dictyoglomus</taxon>
    </lineage>
</organism>
<reference key="1">
    <citation type="journal article" date="2016" name="Front. Microbiol.">
        <title>The complete genome sequence of hyperthermophile Dictyoglomus turgidum DSM 6724 reveals a specialized carbohydrate fermentor.</title>
        <authorList>
            <person name="Brumm P.J."/>
            <person name="Gowda K."/>
            <person name="Robb F.T."/>
            <person name="Mead D.A."/>
        </authorList>
    </citation>
    <scope>NUCLEOTIDE SEQUENCE [LARGE SCALE GENOMIC DNA]</scope>
    <source>
        <strain>DSM 6724 / Z-1310</strain>
    </source>
</reference>
<proteinExistence type="inferred from homology"/>
<gene>
    <name evidence="1" type="primary">pyrF</name>
    <name type="ordered locus">Dtur_1571</name>
</gene>
<feature type="chain" id="PRO_1000164567" description="Orotidine 5'-phosphate decarboxylase">
    <location>
        <begin position="1"/>
        <end position="244"/>
    </location>
</feature>
<feature type="active site" description="Proton donor" evidence="1">
    <location>
        <position position="63"/>
    </location>
</feature>
<feature type="binding site" evidence="1">
    <location>
        <position position="12"/>
    </location>
    <ligand>
        <name>substrate</name>
    </ligand>
</feature>
<feature type="binding site" evidence="1">
    <location>
        <position position="34"/>
    </location>
    <ligand>
        <name>substrate</name>
    </ligand>
</feature>
<feature type="binding site" evidence="1">
    <location>
        <begin position="61"/>
        <end position="70"/>
    </location>
    <ligand>
        <name>substrate</name>
    </ligand>
</feature>
<feature type="binding site" evidence="1">
    <location>
        <position position="125"/>
    </location>
    <ligand>
        <name>substrate</name>
    </ligand>
</feature>
<feature type="binding site" evidence="1">
    <location>
        <position position="187"/>
    </location>
    <ligand>
        <name>substrate</name>
    </ligand>
</feature>
<feature type="binding site" evidence="1">
    <location>
        <position position="196"/>
    </location>
    <ligand>
        <name>substrate</name>
    </ligand>
</feature>
<feature type="binding site" evidence="1">
    <location>
        <position position="216"/>
    </location>
    <ligand>
        <name>substrate</name>
    </ligand>
</feature>
<feature type="binding site" evidence="1">
    <location>
        <position position="217"/>
    </location>
    <ligand>
        <name>substrate</name>
    </ligand>
</feature>
<dbReference type="EC" id="4.1.1.23" evidence="1"/>
<dbReference type="EMBL" id="CP001251">
    <property type="protein sequence ID" value="ACK42845.1"/>
    <property type="molecule type" value="Genomic_DNA"/>
</dbReference>
<dbReference type="RefSeq" id="WP_012583920.1">
    <property type="nucleotide sequence ID" value="NC_011661.1"/>
</dbReference>
<dbReference type="RefSeq" id="YP_002353459.1">
    <property type="nucleotide sequence ID" value="NC_011661.1"/>
</dbReference>
<dbReference type="SMR" id="B8E2K1"/>
<dbReference type="FunCoup" id="B8E2K1">
    <property type="interactions" value="142"/>
</dbReference>
<dbReference type="STRING" id="515635.Dtur_1571"/>
<dbReference type="EnsemblBacteria" id="ACK42845">
    <property type="protein sequence ID" value="ACK42845"/>
    <property type="gene ID" value="Dtur_1571"/>
</dbReference>
<dbReference type="KEGG" id="dtu:Dtur_1571"/>
<dbReference type="PATRIC" id="fig|515635.4.peg.1619"/>
<dbReference type="eggNOG" id="COG0284">
    <property type="taxonomic scope" value="Bacteria"/>
</dbReference>
<dbReference type="HOGENOM" id="CLU_067069_0_0_0"/>
<dbReference type="InParanoid" id="B8E2K1"/>
<dbReference type="OrthoDB" id="9806203at2"/>
<dbReference type="UniPathway" id="UPA00070">
    <property type="reaction ID" value="UER00120"/>
</dbReference>
<dbReference type="Proteomes" id="UP000007719">
    <property type="component" value="Chromosome"/>
</dbReference>
<dbReference type="GO" id="GO:0005829">
    <property type="term" value="C:cytosol"/>
    <property type="evidence" value="ECO:0000318"/>
    <property type="project" value="GO_Central"/>
</dbReference>
<dbReference type="GO" id="GO:0004590">
    <property type="term" value="F:orotidine-5'-phosphate decarboxylase activity"/>
    <property type="evidence" value="ECO:0000318"/>
    <property type="project" value="GO_Central"/>
</dbReference>
<dbReference type="GO" id="GO:0006207">
    <property type="term" value="P:'de novo' pyrimidine nucleobase biosynthetic process"/>
    <property type="evidence" value="ECO:0000318"/>
    <property type="project" value="GO_Central"/>
</dbReference>
<dbReference type="GO" id="GO:0044205">
    <property type="term" value="P:'de novo' UMP biosynthetic process"/>
    <property type="evidence" value="ECO:0007669"/>
    <property type="project" value="UniProtKB-UniRule"/>
</dbReference>
<dbReference type="CDD" id="cd04725">
    <property type="entry name" value="OMP_decarboxylase_like"/>
    <property type="match status" value="1"/>
</dbReference>
<dbReference type="FunFam" id="3.20.20.70:FF:000015">
    <property type="entry name" value="Orotidine 5'-phosphate decarboxylase"/>
    <property type="match status" value="1"/>
</dbReference>
<dbReference type="Gene3D" id="3.20.20.70">
    <property type="entry name" value="Aldolase class I"/>
    <property type="match status" value="1"/>
</dbReference>
<dbReference type="HAMAP" id="MF_01200_B">
    <property type="entry name" value="OMPdecase_type1_B"/>
    <property type="match status" value="1"/>
</dbReference>
<dbReference type="InterPro" id="IPR013785">
    <property type="entry name" value="Aldolase_TIM"/>
</dbReference>
<dbReference type="InterPro" id="IPR014732">
    <property type="entry name" value="OMPdecase"/>
</dbReference>
<dbReference type="InterPro" id="IPR018089">
    <property type="entry name" value="OMPdecase_AS"/>
</dbReference>
<dbReference type="InterPro" id="IPR047596">
    <property type="entry name" value="OMPdecase_bac"/>
</dbReference>
<dbReference type="InterPro" id="IPR001754">
    <property type="entry name" value="OMPdeCOase_dom"/>
</dbReference>
<dbReference type="InterPro" id="IPR011060">
    <property type="entry name" value="RibuloseP-bd_barrel"/>
</dbReference>
<dbReference type="NCBIfam" id="NF001273">
    <property type="entry name" value="PRK00230.1"/>
    <property type="match status" value="1"/>
</dbReference>
<dbReference type="NCBIfam" id="TIGR01740">
    <property type="entry name" value="pyrF"/>
    <property type="match status" value="1"/>
</dbReference>
<dbReference type="PANTHER" id="PTHR32119">
    <property type="entry name" value="OROTIDINE 5'-PHOSPHATE DECARBOXYLASE"/>
    <property type="match status" value="1"/>
</dbReference>
<dbReference type="PANTHER" id="PTHR32119:SF2">
    <property type="entry name" value="OROTIDINE 5'-PHOSPHATE DECARBOXYLASE"/>
    <property type="match status" value="1"/>
</dbReference>
<dbReference type="Pfam" id="PF00215">
    <property type="entry name" value="OMPdecase"/>
    <property type="match status" value="1"/>
</dbReference>
<dbReference type="SMART" id="SM00934">
    <property type="entry name" value="OMPdecase"/>
    <property type="match status" value="1"/>
</dbReference>
<dbReference type="SUPFAM" id="SSF51366">
    <property type="entry name" value="Ribulose-phoshate binding barrel"/>
    <property type="match status" value="1"/>
</dbReference>
<dbReference type="PROSITE" id="PS00156">
    <property type="entry name" value="OMPDECASE"/>
    <property type="match status" value="1"/>
</dbReference>
<accession>B8E2K1</accession>
<protein>
    <recommendedName>
        <fullName evidence="1">Orotidine 5'-phosphate decarboxylase</fullName>
        <ecNumber evidence="1">4.1.1.23</ecNumber>
    </recommendedName>
    <alternativeName>
        <fullName evidence="1">OMP decarboxylase</fullName>
        <shortName evidence="1">OMPDCase</shortName>
        <shortName evidence="1">OMPdecase</shortName>
    </alternativeName>
</protein>
<sequence>MRKYYPIIVALDFPEEKRALEIAEKLVPYIKNFKVGLELFSVAGPHIVKALKEMGTNVFIDLKLFDIPNTVVRTLDRLLALEPFMVTLHILGGEEMLRESVKLVSQYKESNKTEYPYLLGVTVLTSFNEETLRRSWGISRSLPEQVLFLAQLAQETGLDGVIASPWEIELLRNNLKRPMLIVTPGIRLTKEKTDDQQRIMTPREALERGSDYLVIGRPITQSPDPYEVIQNIRSQIEDIVESRL</sequence>
<evidence type="ECO:0000255" key="1">
    <source>
        <dbReference type="HAMAP-Rule" id="MF_01200"/>
    </source>
</evidence>
<name>PYRF_DICTD</name>
<comment type="function">
    <text evidence="1">Catalyzes the decarboxylation of orotidine 5'-monophosphate (OMP) to uridine 5'-monophosphate (UMP).</text>
</comment>
<comment type="catalytic activity">
    <reaction evidence="1">
        <text>orotidine 5'-phosphate + H(+) = UMP + CO2</text>
        <dbReference type="Rhea" id="RHEA:11596"/>
        <dbReference type="ChEBI" id="CHEBI:15378"/>
        <dbReference type="ChEBI" id="CHEBI:16526"/>
        <dbReference type="ChEBI" id="CHEBI:57538"/>
        <dbReference type="ChEBI" id="CHEBI:57865"/>
        <dbReference type="EC" id="4.1.1.23"/>
    </reaction>
</comment>
<comment type="pathway">
    <text evidence="1">Pyrimidine metabolism; UMP biosynthesis via de novo pathway; UMP from orotate: step 2/2.</text>
</comment>
<comment type="subunit">
    <text evidence="1">Homodimer.</text>
</comment>
<comment type="similarity">
    <text evidence="1">Belongs to the OMP decarboxylase family. Type 1 subfamily.</text>
</comment>
<keyword id="KW-0210">Decarboxylase</keyword>
<keyword id="KW-0456">Lyase</keyword>
<keyword id="KW-0665">Pyrimidine biosynthesis</keyword>
<keyword id="KW-1185">Reference proteome</keyword>